<keyword id="KW-0007">Acetylation</keyword>
<keyword id="KW-0597">Phosphoprotein</keyword>
<keyword id="KW-1185">Reference proteome</keyword>
<organism>
    <name type="scientific">Mus musculus</name>
    <name type="common">Mouse</name>
    <dbReference type="NCBI Taxonomy" id="10090"/>
    <lineage>
        <taxon>Eukaryota</taxon>
        <taxon>Metazoa</taxon>
        <taxon>Chordata</taxon>
        <taxon>Craniata</taxon>
        <taxon>Vertebrata</taxon>
        <taxon>Euteleostomi</taxon>
        <taxon>Mammalia</taxon>
        <taxon>Eutheria</taxon>
        <taxon>Euarchontoglires</taxon>
        <taxon>Glires</taxon>
        <taxon>Rodentia</taxon>
        <taxon>Myomorpha</taxon>
        <taxon>Muroidea</taxon>
        <taxon>Muridae</taxon>
        <taxon>Murinae</taxon>
        <taxon>Mus</taxon>
        <taxon>Mus</taxon>
    </lineage>
</organism>
<reference key="1">
    <citation type="journal article" date="2005" name="Science">
        <title>The transcriptional landscape of the mammalian genome.</title>
        <authorList>
            <person name="Carninci P."/>
            <person name="Kasukawa T."/>
            <person name="Katayama S."/>
            <person name="Gough J."/>
            <person name="Frith M.C."/>
            <person name="Maeda N."/>
            <person name="Oyama R."/>
            <person name="Ravasi T."/>
            <person name="Lenhard B."/>
            <person name="Wells C."/>
            <person name="Kodzius R."/>
            <person name="Shimokawa K."/>
            <person name="Bajic V.B."/>
            <person name="Brenner S.E."/>
            <person name="Batalov S."/>
            <person name="Forrest A.R."/>
            <person name="Zavolan M."/>
            <person name="Davis M.J."/>
            <person name="Wilming L.G."/>
            <person name="Aidinis V."/>
            <person name="Allen J.E."/>
            <person name="Ambesi-Impiombato A."/>
            <person name="Apweiler R."/>
            <person name="Aturaliya R.N."/>
            <person name="Bailey T.L."/>
            <person name="Bansal M."/>
            <person name="Baxter L."/>
            <person name="Beisel K.W."/>
            <person name="Bersano T."/>
            <person name="Bono H."/>
            <person name="Chalk A.M."/>
            <person name="Chiu K.P."/>
            <person name="Choudhary V."/>
            <person name="Christoffels A."/>
            <person name="Clutterbuck D.R."/>
            <person name="Crowe M.L."/>
            <person name="Dalla E."/>
            <person name="Dalrymple B.P."/>
            <person name="de Bono B."/>
            <person name="Della Gatta G."/>
            <person name="di Bernardo D."/>
            <person name="Down T."/>
            <person name="Engstrom P."/>
            <person name="Fagiolini M."/>
            <person name="Faulkner G."/>
            <person name="Fletcher C.F."/>
            <person name="Fukushima T."/>
            <person name="Furuno M."/>
            <person name="Futaki S."/>
            <person name="Gariboldi M."/>
            <person name="Georgii-Hemming P."/>
            <person name="Gingeras T.R."/>
            <person name="Gojobori T."/>
            <person name="Green R.E."/>
            <person name="Gustincich S."/>
            <person name="Harbers M."/>
            <person name="Hayashi Y."/>
            <person name="Hensch T.K."/>
            <person name="Hirokawa N."/>
            <person name="Hill D."/>
            <person name="Huminiecki L."/>
            <person name="Iacono M."/>
            <person name="Ikeo K."/>
            <person name="Iwama A."/>
            <person name="Ishikawa T."/>
            <person name="Jakt M."/>
            <person name="Kanapin A."/>
            <person name="Katoh M."/>
            <person name="Kawasawa Y."/>
            <person name="Kelso J."/>
            <person name="Kitamura H."/>
            <person name="Kitano H."/>
            <person name="Kollias G."/>
            <person name="Krishnan S.P."/>
            <person name="Kruger A."/>
            <person name="Kummerfeld S.K."/>
            <person name="Kurochkin I.V."/>
            <person name="Lareau L.F."/>
            <person name="Lazarevic D."/>
            <person name="Lipovich L."/>
            <person name="Liu J."/>
            <person name="Liuni S."/>
            <person name="McWilliam S."/>
            <person name="Madan Babu M."/>
            <person name="Madera M."/>
            <person name="Marchionni L."/>
            <person name="Matsuda H."/>
            <person name="Matsuzawa S."/>
            <person name="Miki H."/>
            <person name="Mignone F."/>
            <person name="Miyake S."/>
            <person name="Morris K."/>
            <person name="Mottagui-Tabar S."/>
            <person name="Mulder N."/>
            <person name="Nakano N."/>
            <person name="Nakauchi H."/>
            <person name="Ng P."/>
            <person name="Nilsson R."/>
            <person name="Nishiguchi S."/>
            <person name="Nishikawa S."/>
            <person name="Nori F."/>
            <person name="Ohara O."/>
            <person name="Okazaki Y."/>
            <person name="Orlando V."/>
            <person name="Pang K.C."/>
            <person name="Pavan W.J."/>
            <person name="Pavesi G."/>
            <person name="Pesole G."/>
            <person name="Petrovsky N."/>
            <person name="Piazza S."/>
            <person name="Reed J."/>
            <person name="Reid J.F."/>
            <person name="Ring B.Z."/>
            <person name="Ringwald M."/>
            <person name="Rost B."/>
            <person name="Ruan Y."/>
            <person name="Salzberg S.L."/>
            <person name="Sandelin A."/>
            <person name="Schneider C."/>
            <person name="Schoenbach C."/>
            <person name="Sekiguchi K."/>
            <person name="Semple C.A."/>
            <person name="Seno S."/>
            <person name="Sessa L."/>
            <person name="Sheng Y."/>
            <person name="Shibata Y."/>
            <person name="Shimada H."/>
            <person name="Shimada K."/>
            <person name="Silva D."/>
            <person name="Sinclair B."/>
            <person name="Sperling S."/>
            <person name="Stupka E."/>
            <person name="Sugiura K."/>
            <person name="Sultana R."/>
            <person name="Takenaka Y."/>
            <person name="Taki K."/>
            <person name="Tammoja K."/>
            <person name="Tan S.L."/>
            <person name="Tang S."/>
            <person name="Taylor M.S."/>
            <person name="Tegner J."/>
            <person name="Teichmann S.A."/>
            <person name="Ueda H.R."/>
            <person name="van Nimwegen E."/>
            <person name="Verardo R."/>
            <person name="Wei C.L."/>
            <person name="Yagi K."/>
            <person name="Yamanishi H."/>
            <person name="Zabarovsky E."/>
            <person name="Zhu S."/>
            <person name="Zimmer A."/>
            <person name="Hide W."/>
            <person name="Bult C."/>
            <person name="Grimmond S.M."/>
            <person name="Teasdale R.D."/>
            <person name="Liu E.T."/>
            <person name="Brusic V."/>
            <person name="Quackenbush J."/>
            <person name="Wahlestedt C."/>
            <person name="Mattick J.S."/>
            <person name="Hume D.A."/>
            <person name="Kai C."/>
            <person name="Sasaki D."/>
            <person name="Tomaru Y."/>
            <person name="Fukuda S."/>
            <person name="Kanamori-Katayama M."/>
            <person name="Suzuki M."/>
            <person name="Aoki J."/>
            <person name="Arakawa T."/>
            <person name="Iida J."/>
            <person name="Imamura K."/>
            <person name="Itoh M."/>
            <person name="Kato T."/>
            <person name="Kawaji H."/>
            <person name="Kawagashira N."/>
            <person name="Kawashima T."/>
            <person name="Kojima M."/>
            <person name="Kondo S."/>
            <person name="Konno H."/>
            <person name="Nakano K."/>
            <person name="Ninomiya N."/>
            <person name="Nishio T."/>
            <person name="Okada M."/>
            <person name="Plessy C."/>
            <person name="Shibata K."/>
            <person name="Shiraki T."/>
            <person name="Suzuki S."/>
            <person name="Tagami M."/>
            <person name="Waki K."/>
            <person name="Watahiki A."/>
            <person name="Okamura-Oho Y."/>
            <person name="Suzuki H."/>
            <person name="Kawai J."/>
            <person name="Hayashizaki Y."/>
        </authorList>
    </citation>
    <scope>NUCLEOTIDE SEQUENCE [LARGE SCALE MRNA]</scope>
    <source>
        <strain>C57BL/6J</strain>
        <tissue>Embryo</tissue>
        <tissue>Testis</tissue>
    </source>
</reference>
<reference key="2">
    <citation type="journal article" date="2004" name="Genome Res.">
        <title>The status, quality, and expansion of the NIH full-length cDNA project: the Mammalian Gene Collection (MGC).</title>
        <authorList>
            <consortium name="The MGC Project Team"/>
        </authorList>
    </citation>
    <scope>NUCLEOTIDE SEQUENCE [LARGE SCALE MRNA]</scope>
    <source>
        <strain>C57BL/6J</strain>
        <strain>FVB/N</strain>
        <tissue>Mammary tumor</tissue>
    </source>
</reference>
<accession>Q9CQ90</accession>
<name>CI085_MOUSE</name>
<sequence>MSSQKGNVTRSRPQKHQNTFTFKNDKFDKSVQTKKINAKLHDGVCQRCKEVLEWRVKYSKYKPLSKPKKCVKCLQKTVKDSYHIMCRPCACELEVCAKCGKKEEIVIPFNKEPDAPENTENEGSGHRRRCGRKEDSDEDLDAESDSDGEDGDTQA</sequence>
<dbReference type="EMBL" id="AK004308">
    <property type="protein sequence ID" value="BAB23257.1"/>
    <property type="molecule type" value="mRNA"/>
</dbReference>
<dbReference type="EMBL" id="AK016266">
    <property type="protein sequence ID" value="BAB30168.1"/>
    <property type="molecule type" value="mRNA"/>
</dbReference>
<dbReference type="EMBL" id="BC023385">
    <property type="protein sequence ID" value="AAH23385.1"/>
    <property type="molecule type" value="mRNA"/>
</dbReference>
<dbReference type="CCDS" id="CCDS29699.1"/>
<dbReference type="RefSeq" id="NP_079699.1">
    <property type="nucleotide sequence ID" value="NM_025423.2"/>
</dbReference>
<dbReference type="RefSeq" id="XP_036019387.1">
    <property type="nucleotide sequence ID" value="XM_036163494.1"/>
</dbReference>
<dbReference type="SMR" id="Q9CQ90"/>
<dbReference type="BioGRID" id="211298">
    <property type="interactions" value="1"/>
</dbReference>
<dbReference type="FunCoup" id="Q9CQ90">
    <property type="interactions" value="78"/>
</dbReference>
<dbReference type="iPTMnet" id="Q9CQ90"/>
<dbReference type="PhosphoSitePlus" id="Q9CQ90"/>
<dbReference type="PaxDb" id="10090-ENSMUSP00000048395"/>
<dbReference type="PeptideAtlas" id="Q9CQ90"/>
<dbReference type="Pumba" id="Q9CQ90"/>
<dbReference type="Antibodypedia" id="60695">
    <property type="antibodies" value="55 antibodies from 9 providers"/>
</dbReference>
<dbReference type="DNASU" id="66206"/>
<dbReference type="Ensembl" id="ENSMUST00000038830.10">
    <property type="protein sequence ID" value="ENSMUSP00000048395.4"/>
    <property type="gene ID" value="ENSMUSG00000035171.10"/>
</dbReference>
<dbReference type="GeneID" id="118568607"/>
<dbReference type="GeneID" id="66206"/>
<dbReference type="KEGG" id="mmu:66206"/>
<dbReference type="UCSC" id="uc008gyz.1">
    <property type="organism name" value="mouse"/>
</dbReference>
<dbReference type="AGR" id="MGI:1913456"/>
<dbReference type="MGI" id="MGI:1913456">
    <property type="gene designation" value="1110059E24Rik"/>
</dbReference>
<dbReference type="VEuPathDB" id="HostDB:ENSMUSG00000035171"/>
<dbReference type="eggNOG" id="KOG3241">
    <property type="taxonomic scope" value="Eukaryota"/>
</dbReference>
<dbReference type="GeneTree" id="ENSGT00440000033805"/>
<dbReference type="HOGENOM" id="CLU_087756_1_0_1"/>
<dbReference type="InParanoid" id="Q9CQ90"/>
<dbReference type="OMA" id="MNFERTE"/>
<dbReference type="OrthoDB" id="250548at2759"/>
<dbReference type="PhylomeDB" id="Q9CQ90"/>
<dbReference type="TreeFam" id="TF324614"/>
<dbReference type="BioGRID-ORCS" id="66206">
    <property type="hits" value="2 hits in 76 CRISPR screens"/>
</dbReference>
<dbReference type="PRO" id="PR:Q9CQ90"/>
<dbReference type="Proteomes" id="UP000000589">
    <property type="component" value="Chromosome 19"/>
</dbReference>
<dbReference type="RNAct" id="Q9CQ90">
    <property type="molecule type" value="protein"/>
</dbReference>
<dbReference type="Bgee" id="ENSMUSG00000035171">
    <property type="expression patterns" value="Expressed in undifferentiated genital tubercle and 266 other cell types or tissues"/>
</dbReference>
<dbReference type="ExpressionAtlas" id="Q9CQ90">
    <property type="expression patterns" value="baseline and differential"/>
</dbReference>
<dbReference type="InterPro" id="IPR019351">
    <property type="entry name" value="DUF2039"/>
</dbReference>
<dbReference type="PANTHER" id="PTHR22876:SF5">
    <property type="entry name" value="CHROMOSOME 9 OPEN READING FRAME 85"/>
    <property type="match status" value="1"/>
</dbReference>
<dbReference type="PANTHER" id="PTHR22876">
    <property type="entry name" value="ZGC:101016"/>
    <property type="match status" value="1"/>
</dbReference>
<dbReference type="Pfam" id="PF10217">
    <property type="entry name" value="DUF2039"/>
    <property type="match status" value="1"/>
</dbReference>
<proteinExistence type="evidence at transcript level"/>
<protein>
    <recommendedName>
        <fullName>Uncharacterized protein C9orf85 homolog</fullName>
    </recommendedName>
</protein>
<feature type="initiator methionine" description="Removed" evidence="2">
    <location>
        <position position="1"/>
    </location>
</feature>
<feature type="chain" id="PRO_0000089721" description="Uncharacterized protein C9orf85 homolog">
    <location>
        <begin position="2"/>
        <end position="155"/>
    </location>
</feature>
<feature type="region of interest" description="Disordered" evidence="3">
    <location>
        <begin position="1"/>
        <end position="22"/>
    </location>
</feature>
<feature type="region of interest" description="Disordered" evidence="3">
    <location>
        <begin position="110"/>
        <end position="155"/>
    </location>
</feature>
<feature type="compositionally biased region" description="Acidic residues" evidence="3">
    <location>
        <begin position="136"/>
        <end position="155"/>
    </location>
</feature>
<feature type="modified residue" description="N-acetylserine" evidence="2">
    <location>
        <position position="2"/>
    </location>
</feature>
<feature type="modified residue" description="Phosphoserine" evidence="1">
    <location>
        <position position="136"/>
    </location>
</feature>
<feature type="modified residue" description="Phosphoserine" evidence="1">
    <location>
        <position position="144"/>
    </location>
</feature>
<feature type="modified residue" description="Phosphoserine" evidence="1">
    <location>
        <position position="146"/>
    </location>
</feature>
<evidence type="ECO:0000250" key="1">
    <source>
        <dbReference type="UniProtKB" id="Q68FU5"/>
    </source>
</evidence>
<evidence type="ECO:0000250" key="2">
    <source>
        <dbReference type="UniProtKB" id="Q96MD7"/>
    </source>
</evidence>
<evidence type="ECO:0000256" key="3">
    <source>
        <dbReference type="SAM" id="MobiDB-lite"/>
    </source>
</evidence>